<proteinExistence type="evidence at transcript level"/>
<protein>
    <recommendedName>
        <fullName>Elongation factor 1-alpha</fullName>
        <shortName>EF-1-alpha</shortName>
        <ecNumber evidence="1">3.6.5.-</ecNumber>
    </recommendedName>
</protein>
<sequence>MGKEKIHINIVVIGHVDSGKSTSTGHLIYKCGGIDKRTIEKFEKEAAEMGKGSFKYAWVLDKLKAERERGITIDIALWKFETSKYYVTIIDAPGHRDFIKNMITGTSQADCAVLIVAAGVGEFEAGISKNGQTREHALLAFTLGVKQLIVGVNKMDSTEPPYSQARFEEIQKEVSTYIKKIGYNPAAVAFVPISGWHGDNMLEASDKMSWFKGWKIERKDGNASGTTLLEALDAILPPSRPTDKPLRLPLQDVYKIGGIGTVPVGRVETGVLKPGMVVTFAPPNLTTEVKSVEMHHESLPEAVPGDNVGFNIKNVSVKEIRRGYVAGDSKNDPPKAAASFNAQVIILNHPGQINQGYAPVLDCHTAHIACKFNELIEKIDRRSGKKLEDNPKFVKSGDAAIVKLIPQKPMVVEPFSNYPPLGRFAVRDMRQTVAVGVIKAVDTKEISGKTTKAAEKAQKKK</sequence>
<gene>
    <name type="primary">eef1a</name>
    <name type="synonym">ef1a</name>
</gene>
<dbReference type="EC" id="3.6.5.-" evidence="1"/>
<dbReference type="EMBL" id="AB013606">
    <property type="protein sequence ID" value="BAA34370.1"/>
    <property type="molecule type" value="mRNA"/>
</dbReference>
<dbReference type="EMBL" id="AB020734">
    <property type="protein sequence ID" value="BAA78376.1"/>
    <property type="molecule type" value="Genomic_DNA"/>
</dbReference>
<dbReference type="PIR" id="T51991">
    <property type="entry name" value="T51991"/>
</dbReference>
<dbReference type="RefSeq" id="NP_001098132.1">
    <property type="nucleotide sequence ID" value="NM_001104662.1"/>
</dbReference>
<dbReference type="RefSeq" id="XP_011479259.1">
    <property type="nucleotide sequence ID" value="XM_011480957.3"/>
</dbReference>
<dbReference type="SMR" id="Q9YIC0"/>
<dbReference type="STRING" id="8090.ENSORLP00000009543"/>
<dbReference type="Ensembl" id="ENSORLT00000009544.2">
    <property type="protein sequence ID" value="ENSORLP00000009543.1"/>
    <property type="gene ID" value="ENSORLG00000007614.2"/>
</dbReference>
<dbReference type="Ensembl" id="ENSORLT00020017896.1">
    <property type="protein sequence ID" value="ENSORLP00020028579.1"/>
    <property type="gene ID" value="ENSORLG00020012076.1"/>
</dbReference>
<dbReference type="GeneID" id="100049188"/>
<dbReference type="KEGG" id="ola:100049188"/>
<dbReference type="CTD" id="100049188"/>
<dbReference type="eggNOG" id="KOG0052">
    <property type="taxonomic scope" value="Eukaryota"/>
</dbReference>
<dbReference type="GeneTree" id="ENSGT00940000164334"/>
<dbReference type="HOGENOM" id="CLU_007265_3_5_1"/>
<dbReference type="InParanoid" id="Q9YIC0"/>
<dbReference type="OMA" id="DMRNTVA"/>
<dbReference type="OrthoDB" id="342024at2759"/>
<dbReference type="TreeFam" id="TF300304"/>
<dbReference type="Proteomes" id="UP000001038">
    <property type="component" value="Chromosome 11"/>
</dbReference>
<dbReference type="Proteomes" id="UP000265180">
    <property type="component" value="Chromosome 11"/>
</dbReference>
<dbReference type="Proteomes" id="UP000265200">
    <property type="component" value="Unplaced"/>
</dbReference>
<dbReference type="Bgee" id="ENSORLG00000007614">
    <property type="expression patterns" value="Expressed in gastrula and 14 other cell types or tissues"/>
</dbReference>
<dbReference type="GO" id="GO:0005737">
    <property type="term" value="C:cytoplasm"/>
    <property type="evidence" value="ECO:0007669"/>
    <property type="project" value="UniProtKB-SubCell"/>
</dbReference>
<dbReference type="GO" id="GO:0005525">
    <property type="term" value="F:GTP binding"/>
    <property type="evidence" value="ECO:0007669"/>
    <property type="project" value="UniProtKB-KW"/>
</dbReference>
<dbReference type="GO" id="GO:0003924">
    <property type="term" value="F:GTPase activity"/>
    <property type="evidence" value="ECO:0000250"/>
    <property type="project" value="UniProtKB"/>
</dbReference>
<dbReference type="GO" id="GO:0003746">
    <property type="term" value="F:translation elongation factor activity"/>
    <property type="evidence" value="ECO:0000250"/>
    <property type="project" value="UniProtKB"/>
</dbReference>
<dbReference type="GO" id="GO:0006412">
    <property type="term" value="P:translation"/>
    <property type="evidence" value="ECO:0000318"/>
    <property type="project" value="GO_Central"/>
</dbReference>
<dbReference type="GO" id="GO:0006414">
    <property type="term" value="P:translational elongation"/>
    <property type="evidence" value="ECO:0000250"/>
    <property type="project" value="UniProtKB"/>
</dbReference>
<dbReference type="CDD" id="cd01883">
    <property type="entry name" value="EF1_alpha"/>
    <property type="match status" value="1"/>
</dbReference>
<dbReference type="CDD" id="cd03693">
    <property type="entry name" value="EF1_alpha_II"/>
    <property type="match status" value="1"/>
</dbReference>
<dbReference type="CDD" id="cd03705">
    <property type="entry name" value="EF1_alpha_III"/>
    <property type="match status" value="1"/>
</dbReference>
<dbReference type="FunFam" id="2.40.30.10:FF:000003">
    <property type="entry name" value="Elongation factor 1-alpha"/>
    <property type="match status" value="1"/>
</dbReference>
<dbReference type="FunFam" id="2.40.30.10:FF:000005">
    <property type="entry name" value="Elongation factor 1-alpha"/>
    <property type="match status" value="1"/>
</dbReference>
<dbReference type="FunFam" id="3.40.50.300:FF:000090">
    <property type="entry name" value="Elongation factor 1-alpha"/>
    <property type="match status" value="1"/>
</dbReference>
<dbReference type="Gene3D" id="3.40.50.300">
    <property type="entry name" value="P-loop containing nucleotide triphosphate hydrolases"/>
    <property type="match status" value="1"/>
</dbReference>
<dbReference type="Gene3D" id="2.40.30.10">
    <property type="entry name" value="Translation factors"/>
    <property type="match status" value="2"/>
</dbReference>
<dbReference type="HAMAP" id="MF_00118_A">
    <property type="entry name" value="EF_Tu_A"/>
    <property type="match status" value="1"/>
</dbReference>
<dbReference type="InterPro" id="IPR004161">
    <property type="entry name" value="EFTu-like_2"/>
</dbReference>
<dbReference type="InterPro" id="IPR031157">
    <property type="entry name" value="G_TR_CS"/>
</dbReference>
<dbReference type="InterPro" id="IPR054696">
    <property type="entry name" value="GTP-eEF1A_C"/>
</dbReference>
<dbReference type="InterPro" id="IPR027417">
    <property type="entry name" value="P-loop_NTPase"/>
</dbReference>
<dbReference type="InterPro" id="IPR000795">
    <property type="entry name" value="T_Tr_GTP-bd_dom"/>
</dbReference>
<dbReference type="InterPro" id="IPR050100">
    <property type="entry name" value="TRAFAC_GTPase_members"/>
</dbReference>
<dbReference type="InterPro" id="IPR009000">
    <property type="entry name" value="Transl_B-barrel_sf"/>
</dbReference>
<dbReference type="InterPro" id="IPR009001">
    <property type="entry name" value="Transl_elong_EF1A/Init_IF2_C"/>
</dbReference>
<dbReference type="InterPro" id="IPR004539">
    <property type="entry name" value="Transl_elong_EF1A_euk/arc"/>
</dbReference>
<dbReference type="NCBIfam" id="TIGR00483">
    <property type="entry name" value="EF-1_alpha"/>
    <property type="match status" value="1"/>
</dbReference>
<dbReference type="NCBIfam" id="NF008969">
    <property type="entry name" value="PRK12317.1"/>
    <property type="match status" value="1"/>
</dbReference>
<dbReference type="PANTHER" id="PTHR23115">
    <property type="entry name" value="TRANSLATION FACTOR"/>
    <property type="match status" value="1"/>
</dbReference>
<dbReference type="Pfam" id="PF22594">
    <property type="entry name" value="GTP-eEF1A_C"/>
    <property type="match status" value="1"/>
</dbReference>
<dbReference type="Pfam" id="PF00009">
    <property type="entry name" value="GTP_EFTU"/>
    <property type="match status" value="1"/>
</dbReference>
<dbReference type="Pfam" id="PF03144">
    <property type="entry name" value="GTP_EFTU_D2"/>
    <property type="match status" value="1"/>
</dbReference>
<dbReference type="PRINTS" id="PR00315">
    <property type="entry name" value="ELONGATNFCT"/>
</dbReference>
<dbReference type="SUPFAM" id="SSF50465">
    <property type="entry name" value="EF-Tu/eEF-1alpha/eIF2-gamma C-terminal domain"/>
    <property type="match status" value="1"/>
</dbReference>
<dbReference type="SUPFAM" id="SSF52540">
    <property type="entry name" value="P-loop containing nucleoside triphosphate hydrolases"/>
    <property type="match status" value="1"/>
</dbReference>
<dbReference type="SUPFAM" id="SSF50447">
    <property type="entry name" value="Translation proteins"/>
    <property type="match status" value="1"/>
</dbReference>
<dbReference type="PROSITE" id="PS00301">
    <property type="entry name" value="G_TR_1"/>
    <property type="match status" value="1"/>
</dbReference>
<dbReference type="PROSITE" id="PS51722">
    <property type="entry name" value="G_TR_2"/>
    <property type="match status" value="1"/>
</dbReference>
<accession>Q9YIC0</accession>
<comment type="function">
    <text evidence="1">Translation elongation factor that catalyzes the GTP-dependent binding of aminoacyl-tRNA (aa-tRNA) to the A-site of ribosomes during the elongation phase of protein synthesis. Base pairing between the mRNA codon and the aa-tRNA anticodon promotes GTP hydrolysis, releasing the aa-tRNA from EEF1A1 and allowing its accommodation into the ribosome. The growing protein chain is subsequently transferred from the P-site peptidyl tRNA to the A-site aa-tRNA, extending it by one amino acid through ribosome-catalyzed peptide bond formation.</text>
</comment>
<comment type="catalytic activity">
    <reaction evidence="1">
        <text>GTP + H2O = GDP + phosphate + H(+)</text>
        <dbReference type="Rhea" id="RHEA:19669"/>
        <dbReference type="ChEBI" id="CHEBI:15377"/>
        <dbReference type="ChEBI" id="CHEBI:15378"/>
        <dbReference type="ChEBI" id="CHEBI:37565"/>
        <dbReference type="ChEBI" id="CHEBI:43474"/>
        <dbReference type="ChEBI" id="CHEBI:58189"/>
    </reaction>
    <physiologicalReaction direction="left-to-right" evidence="1">
        <dbReference type="Rhea" id="RHEA:19670"/>
    </physiologicalReaction>
</comment>
<comment type="subcellular location">
    <subcellularLocation>
        <location>Cytoplasm</location>
    </subcellularLocation>
</comment>
<comment type="similarity">
    <text evidence="4">Belongs to the TRAFAC class translation factor GTPase superfamily. Classic translation factor GTPase family. EF-Tu/EF-1A subfamily.</text>
</comment>
<organism>
    <name type="scientific">Oryzias latipes</name>
    <name type="common">Japanese rice fish</name>
    <name type="synonym">Japanese killifish</name>
    <dbReference type="NCBI Taxonomy" id="8090"/>
    <lineage>
        <taxon>Eukaryota</taxon>
        <taxon>Metazoa</taxon>
        <taxon>Chordata</taxon>
        <taxon>Craniata</taxon>
        <taxon>Vertebrata</taxon>
        <taxon>Euteleostomi</taxon>
        <taxon>Actinopterygii</taxon>
        <taxon>Neopterygii</taxon>
        <taxon>Teleostei</taxon>
        <taxon>Neoteleostei</taxon>
        <taxon>Acanthomorphata</taxon>
        <taxon>Ovalentaria</taxon>
        <taxon>Atherinomorphae</taxon>
        <taxon>Beloniformes</taxon>
        <taxon>Adrianichthyidae</taxon>
        <taxon>Oryziinae</taxon>
        <taxon>Oryzias</taxon>
    </lineage>
</organism>
<reference key="1">
    <citation type="submission" date="1998-05" db="EMBL/GenBank/DDBJ databases">
        <title>Medaka polypeptide elongation factor 1 alpha.</title>
        <authorList>
            <person name="Kinoshita M."/>
        </authorList>
    </citation>
    <scope>NUCLEOTIDE SEQUENCE</scope>
    <source>
        <strain>HNI-I</strain>
        <tissue>Liver</tissue>
    </source>
</reference>
<reference key="2">
    <citation type="submission" date="1998-12" db="EMBL/GenBank/DDBJ databases">
        <title>Structure and transcription of the gene cording for polypeptide chain elongation factor 1a of medaka Oryzias latipes.</title>
        <authorList>
            <person name="Kinoshita M."/>
        </authorList>
    </citation>
    <scope>NUCLEOTIDE SEQUENCE</scope>
    <source>
        <strain>HNI-1</strain>
    </source>
</reference>
<keyword id="KW-0963">Cytoplasm</keyword>
<keyword id="KW-0251">Elongation factor</keyword>
<keyword id="KW-0342">GTP-binding</keyword>
<keyword id="KW-0378">Hydrolase</keyword>
<keyword id="KW-0488">Methylation</keyword>
<keyword id="KW-0547">Nucleotide-binding</keyword>
<keyword id="KW-0597">Phosphoprotein</keyword>
<keyword id="KW-0648">Protein biosynthesis</keyword>
<keyword id="KW-1185">Reference proteome</keyword>
<name>EF1A_ORYLA</name>
<feature type="initiator methionine" description="Removed" evidence="1">
    <location>
        <position position="1"/>
    </location>
</feature>
<feature type="chain" id="PRO_0000090897" description="Elongation factor 1-alpha">
    <location>
        <begin position="2"/>
        <end position="461"/>
    </location>
</feature>
<feature type="domain" description="tr-type G">
    <location>
        <begin position="5"/>
        <end position="242"/>
    </location>
</feature>
<feature type="region of interest" description="G1" evidence="3">
    <location>
        <begin position="14"/>
        <end position="21"/>
    </location>
</feature>
<feature type="region of interest" description="G2" evidence="3">
    <location>
        <begin position="70"/>
        <end position="74"/>
    </location>
</feature>
<feature type="region of interest" description="G3" evidence="3">
    <location>
        <begin position="91"/>
        <end position="94"/>
    </location>
</feature>
<feature type="region of interest" description="G4" evidence="3">
    <location>
        <begin position="153"/>
        <end position="156"/>
    </location>
</feature>
<feature type="region of interest" description="G5" evidence="3">
    <location>
        <begin position="194"/>
        <end position="196"/>
    </location>
</feature>
<feature type="binding site" evidence="2">
    <location>
        <begin position="14"/>
        <end position="21"/>
    </location>
    <ligand>
        <name>GTP</name>
        <dbReference type="ChEBI" id="CHEBI:37565"/>
    </ligand>
</feature>
<feature type="binding site" evidence="2">
    <location>
        <begin position="153"/>
        <end position="156"/>
    </location>
    <ligand>
        <name>GTP</name>
        <dbReference type="ChEBI" id="CHEBI:37565"/>
    </ligand>
</feature>
<feature type="binding site" evidence="2">
    <location>
        <begin position="194"/>
        <end position="196"/>
    </location>
    <ligand>
        <name>GTP</name>
        <dbReference type="ChEBI" id="CHEBI:37565"/>
    </ligand>
</feature>
<feature type="modified residue" description="N,N,N-trimethylglycine" evidence="1">
    <location>
        <position position="2"/>
    </location>
</feature>
<feature type="modified residue" description="5-glutamyl glycerylphosphorylethanolamine" evidence="1">
    <location>
        <position position="301"/>
    </location>
</feature>
<feature type="modified residue" description="5-glutamyl glycerylphosphorylethanolamine" evidence="1">
    <location>
        <position position="374"/>
    </location>
</feature>
<evidence type="ECO:0000250" key="1">
    <source>
        <dbReference type="UniProtKB" id="P68104"/>
    </source>
</evidence>
<evidence type="ECO:0000250" key="2">
    <source>
        <dbReference type="UniProtKB" id="P68105"/>
    </source>
</evidence>
<evidence type="ECO:0000255" key="3"/>
<evidence type="ECO:0000305" key="4"/>